<organism>
    <name type="scientific">Enterobacter sp. (strain 638)</name>
    <dbReference type="NCBI Taxonomy" id="399742"/>
    <lineage>
        <taxon>Bacteria</taxon>
        <taxon>Pseudomonadati</taxon>
        <taxon>Pseudomonadota</taxon>
        <taxon>Gammaproteobacteria</taxon>
        <taxon>Enterobacterales</taxon>
        <taxon>Enterobacteriaceae</taxon>
        <taxon>Enterobacter</taxon>
    </lineage>
</organism>
<gene>
    <name evidence="1" type="primary">rplF</name>
    <name type="ordered locus">Ent638_3736</name>
</gene>
<comment type="function">
    <text evidence="1">This protein binds to the 23S rRNA, and is important in its secondary structure. It is located near the subunit interface in the base of the L7/L12 stalk, and near the tRNA binding site of the peptidyltransferase center.</text>
</comment>
<comment type="subunit">
    <text evidence="1">Part of the 50S ribosomal subunit.</text>
</comment>
<comment type="similarity">
    <text evidence="1">Belongs to the universal ribosomal protein uL6 family.</text>
</comment>
<name>RL6_ENT38</name>
<sequence>MSRVAKAPVVIPAGVDVKIDGQVITIKGKNGELTRTLNNAVEVKHADNALTFGPRDGFVDGWAQAGTARALLNSMVVGVTEGFTKKLQLVGVGYRAAIKGNAVGLSLGFSHPVEHPLPAGITAECPTQTEIVLKGADKQLIGQVAADLRAYRRPEPYKGKGVRYADEVVRTKEAKKK</sequence>
<dbReference type="EMBL" id="CP000653">
    <property type="protein sequence ID" value="ABP62393.1"/>
    <property type="molecule type" value="Genomic_DNA"/>
</dbReference>
<dbReference type="RefSeq" id="WP_006178917.1">
    <property type="nucleotide sequence ID" value="NC_009436.1"/>
</dbReference>
<dbReference type="SMR" id="A4WFB3"/>
<dbReference type="STRING" id="399742.Ent638_3736"/>
<dbReference type="GeneID" id="93306711"/>
<dbReference type="KEGG" id="ent:Ent638_3736"/>
<dbReference type="eggNOG" id="COG0097">
    <property type="taxonomic scope" value="Bacteria"/>
</dbReference>
<dbReference type="HOGENOM" id="CLU_065464_1_2_6"/>
<dbReference type="OrthoDB" id="9805007at2"/>
<dbReference type="Proteomes" id="UP000000230">
    <property type="component" value="Chromosome"/>
</dbReference>
<dbReference type="GO" id="GO:0022625">
    <property type="term" value="C:cytosolic large ribosomal subunit"/>
    <property type="evidence" value="ECO:0007669"/>
    <property type="project" value="TreeGrafter"/>
</dbReference>
<dbReference type="GO" id="GO:0019843">
    <property type="term" value="F:rRNA binding"/>
    <property type="evidence" value="ECO:0007669"/>
    <property type="project" value="UniProtKB-UniRule"/>
</dbReference>
<dbReference type="GO" id="GO:0003735">
    <property type="term" value="F:structural constituent of ribosome"/>
    <property type="evidence" value="ECO:0007669"/>
    <property type="project" value="InterPro"/>
</dbReference>
<dbReference type="GO" id="GO:0002181">
    <property type="term" value="P:cytoplasmic translation"/>
    <property type="evidence" value="ECO:0007669"/>
    <property type="project" value="TreeGrafter"/>
</dbReference>
<dbReference type="FunFam" id="3.90.930.12:FF:000001">
    <property type="entry name" value="50S ribosomal protein L6"/>
    <property type="match status" value="1"/>
</dbReference>
<dbReference type="FunFam" id="3.90.930.12:FF:000002">
    <property type="entry name" value="50S ribosomal protein L6"/>
    <property type="match status" value="1"/>
</dbReference>
<dbReference type="Gene3D" id="3.90.930.12">
    <property type="entry name" value="Ribosomal protein L6, alpha-beta domain"/>
    <property type="match status" value="2"/>
</dbReference>
<dbReference type="HAMAP" id="MF_01365_B">
    <property type="entry name" value="Ribosomal_uL6_B"/>
    <property type="match status" value="1"/>
</dbReference>
<dbReference type="InterPro" id="IPR000702">
    <property type="entry name" value="Ribosomal_uL6-like"/>
</dbReference>
<dbReference type="InterPro" id="IPR036789">
    <property type="entry name" value="Ribosomal_uL6-like_a/b-dom_sf"/>
</dbReference>
<dbReference type="InterPro" id="IPR020040">
    <property type="entry name" value="Ribosomal_uL6_a/b-dom"/>
</dbReference>
<dbReference type="InterPro" id="IPR019906">
    <property type="entry name" value="Ribosomal_uL6_bac-type"/>
</dbReference>
<dbReference type="InterPro" id="IPR002358">
    <property type="entry name" value="Ribosomal_uL6_CS"/>
</dbReference>
<dbReference type="NCBIfam" id="TIGR03654">
    <property type="entry name" value="L6_bact"/>
    <property type="match status" value="1"/>
</dbReference>
<dbReference type="PANTHER" id="PTHR11655">
    <property type="entry name" value="60S/50S RIBOSOMAL PROTEIN L6/L9"/>
    <property type="match status" value="1"/>
</dbReference>
<dbReference type="PANTHER" id="PTHR11655:SF14">
    <property type="entry name" value="LARGE RIBOSOMAL SUBUNIT PROTEIN UL6M"/>
    <property type="match status" value="1"/>
</dbReference>
<dbReference type="Pfam" id="PF00347">
    <property type="entry name" value="Ribosomal_L6"/>
    <property type="match status" value="2"/>
</dbReference>
<dbReference type="PIRSF" id="PIRSF002162">
    <property type="entry name" value="Ribosomal_L6"/>
    <property type="match status" value="1"/>
</dbReference>
<dbReference type="PRINTS" id="PR00059">
    <property type="entry name" value="RIBOSOMALL6"/>
</dbReference>
<dbReference type="SUPFAM" id="SSF56053">
    <property type="entry name" value="Ribosomal protein L6"/>
    <property type="match status" value="2"/>
</dbReference>
<dbReference type="PROSITE" id="PS00525">
    <property type="entry name" value="RIBOSOMAL_L6_1"/>
    <property type="match status" value="1"/>
</dbReference>
<evidence type="ECO:0000255" key="1">
    <source>
        <dbReference type="HAMAP-Rule" id="MF_01365"/>
    </source>
</evidence>
<evidence type="ECO:0000305" key="2"/>
<proteinExistence type="inferred from homology"/>
<keyword id="KW-0687">Ribonucleoprotein</keyword>
<keyword id="KW-0689">Ribosomal protein</keyword>
<keyword id="KW-0694">RNA-binding</keyword>
<keyword id="KW-0699">rRNA-binding</keyword>
<accession>A4WFB3</accession>
<reference key="1">
    <citation type="journal article" date="2010" name="PLoS Genet.">
        <title>Genome sequence of the plant growth promoting endophytic bacterium Enterobacter sp. 638.</title>
        <authorList>
            <person name="Taghavi S."/>
            <person name="van der Lelie D."/>
            <person name="Hoffman A."/>
            <person name="Zhang Y.B."/>
            <person name="Walla M.D."/>
            <person name="Vangronsveld J."/>
            <person name="Newman L."/>
            <person name="Monchy S."/>
        </authorList>
    </citation>
    <scope>NUCLEOTIDE SEQUENCE [LARGE SCALE GENOMIC DNA]</scope>
    <source>
        <strain>638</strain>
    </source>
</reference>
<protein>
    <recommendedName>
        <fullName evidence="1">Large ribosomal subunit protein uL6</fullName>
    </recommendedName>
    <alternativeName>
        <fullName evidence="2">50S ribosomal protein L6</fullName>
    </alternativeName>
</protein>
<feature type="chain" id="PRO_1000067979" description="Large ribosomal subunit protein uL6">
    <location>
        <begin position="1"/>
        <end position="177"/>
    </location>
</feature>